<feature type="chain" id="PRO_0000080613" description="Ubiquitin carboxyl-terminal hydrolase 14">
    <location>
        <begin position="1"/>
        <end position="775"/>
    </location>
</feature>
<feature type="domain" description="USP">
    <location>
        <begin position="300"/>
        <end position="774"/>
    </location>
</feature>
<feature type="domain" description="UBA 1" evidence="1">
    <location>
        <begin position="576"/>
        <end position="617"/>
    </location>
</feature>
<feature type="domain" description="UBA 2" evidence="1">
    <location>
        <begin position="639"/>
        <end position="679"/>
    </location>
</feature>
<feature type="zinc finger region" description="UBP-type 1; degenerate" evidence="2">
    <location>
        <begin position="1"/>
        <end position="108"/>
    </location>
</feature>
<feature type="zinc finger region" description="UBP-type 2" evidence="2">
    <location>
        <begin position="151"/>
        <end position="259"/>
    </location>
</feature>
<feature type="active site" description="Nucleophile" evidence="3 4">
    <location>
        <position position="309"/>
    </location>
</feature>
<feature type="active site" description="Proton acceptor" evidence="3 4">
    <location>
        <position position="730"/>
    </location>
</feature>
<feature type="binding site" evidence="2">
    <location>
        <position position="25"/>
    </location>
    <ligand>
        <name>Zn(2+)</name>
        <dbReference type="ChEBI" id="CHEBI:29105"/>
        <label>1</label>
    </ligand>
</feature>
<feature type="binding site" evidence="2">
    <location>
        <position position="28"/>
    </location>
    <ligand>
        <name>Zn(2+)</name>
        <dbReference type="ChEBI" id="CHEBI:29105"/>
        <label>1</label>
    </ligand>
</feature>
<feature type="binding site" evidence="2">
    <location>
        <position position="41"/>
    </location>
    <ligand>
        <name>Zn(2+)</name>
        <dbReference type="ChEBI" id="CHEBI:29105"/>
        <label>2</label>
    </ligand>
</feature>
<feature type="binding site" evidence="2">
    <location>
        <position position="44"/>
    </location>
    <ligand>
        <name>Zn(2+)</name>
        <dbReference type="ChEBI" id="CHEBI:29105"/>
        <label>2</label>
    </ligand>
</feature>
<feature type="binding site" evidence="2">
    <location>
        <position position="49"/>
    </location>
    <ligand>
        <name>Zn(2+)</name>
        <dbReference type="ChEBI" id="CHEBI:29105"/>
        <label>1</label>
    </ligand>
</feature>
<feature type="binding site" evidence="2">
    <location>
        <position position="56"/>
    </location>
    <ligand>
        <name>Zn(2+)</name>
        <dbReference type="ChEBI" id="CHEBI:29105"/>
        <label>1</label>
    </ligand>
</feature>
<feature type="binding site" evidence="2">
    <location>
        <position position="60"/>
    </location>
    <ligand>
        <name>Zn(2+)</name>
        <dbReference type="ChEBI" id="CHEBI:29105"/>
        <label>2</label>
    </ligand>
</feature>
<feature type="binding site" evidence="2">
    <location>
        <position position="66"/>
    </location>
    <ligand>
        <name>Zn(2+)</name>
        <dbReference type="ChEBI" id="CHEBI:29105"/>
        <label>2</label>
    </ligand>
</feature>
<feature type="binding site" evidence="2">
    <location>
        <position position="153"/>
    </location>
    <ligand>
        <name>Zn(2+)</name>
        <dbReference type="ChEBI" id="CHEBI:29105"/>
        <label>3</label>
    </ligand>
</feature>
<feature type="binding site" evidence="2">
    <location>
        <position position="155"/>
    </location>
    <ligand>
        <name>Zn(2+)</name>
        <dbReference type="ChEBI" id="CHEBI:29105"/>
        <label>3</label>
    </ligand>
</feature>
<feature type="binding site" evidence="2">
    <location>
        <position position="174"/>
    </location>
    <ligand>
        <name>Zn(2+)</name>
        <dbReference type="ChEBI" id="CHEBI:29105"/>
        <label>4</label>
    </ligand>
</feature>
<feature type="binding site" evidence="2">
    <location>
        <position position="177"/>
    </location>
    <ligand>
        <name>Zn(2+)</name>
        <dbReference type="ChEBI" id="CHEBI:29105"/>
        <label>4</label>
    </ligand>
</feature>
<feature type="binding site" evidence="2">
    <location>
        <position position="186"/>
    </location>
    <ligand>
        <name>Zn(2+)</name>
        <dbReference type="ChEBI" id="CHEBI:29105"/>
        <label>5</label>
    </ligand>
</feature>
<feature type="binding site" evidence="2">
    <location>
        <position position="189"/>
    </location>
    <ligand>
        <name>Zn(2+)</name>
        <dbReference type="ChEBI" id="CHEBI:29105"/>
        <label>5</label>
    </ligand>
</feature>
<feature type="binding site" evidence="2">
    <location>
        <position position="194"/>
    </location>
    <ligand>
        <name>Zn(2+)</name>
        <dbReference type="ChEBI" id="CHEBI:29105"/>
        <label>4</label>
    </ligand>
</feature>
<feature type="binding site" evidence="2">
    <location>
        <position position="207"/>
    </location>
    <ligand>
        <name>Zn(2+)</name>
        <dbReference type="ChEBI" id="CHEBI:29105"/>
        <label>4</label>
    </ligand>
</feature>
<feature type="binding site" evidence="2">
    <location>
        <position position="211"/>
    </location>
    <ligand>
        <name>Zn(2+)</name>
        <dbReference type="ChEBI" id="CHEBI:29105"/>
        <label>5</label>
    </ligand>
</feature>
<feature type="binding site" evidence="2">
    <location>
        <position position="217"/>
    </location>
    <ligand>
        <name>Zn(2+)</name>
        <dbReference type="ChEBI" id="CHEBI:29105"/>
        <label>5</label>
    </ligand>
</feature>
<feature type="binding site" evidence="2">
    <location>
        <position position="236"/>
    </location>
    <ligand>
        <name>Zn(2+)</name>
        <dbReference type="ChEBI" id="CHEBI:29105"/>
        <label>3</label>
    </ligand>
</feature>
<feature type="binding site" evidence="2">
    <location>
        <position position="239"/>
    </location>
    <ligand>
        <name>Zn(2+)</name>
        <dbReference type="ChEBI" id="CHEBI:29105"/>
        <label>3</label>
    </ligand>
</feature>
<feature type="modified residue" description="Phosphoserine" evidence="5">
    <location>
        <position position="456"/>
    </location>
</feature>
<reference key="1">
    <citation type="journal article" date="2002" name="Nature">
        <title>The genome sequence of Schizosaccharomyces pombe.</title>
        <authorList>
            <person name="Wood V."/>
            <person name="Gwilliam R."/>
            <person name="Rajandream M.A."/>
            <person name="Lyne M.H."/>
            <person name="Lyne R."/>
            <person name="Stewart A."/>
            <person name="Sgouros J.G."/>
            <person name="Peat N."/>
            <person name="Hayles J."/>
            <person name="Baker S.G."/>
            <person name="Basham D."/>
            <person name="Bowman S."/>
            <person name="Brooks K."/>
            <person name="Brown D."/>
            <person name="Brown S."/>
            <person name="Chillingworth T."/>
            <person name="Churcher C.M."/>
            <person name="Collins M."/>
            <person name="Connor R."/>
            <person name="Cronin A."/>
            <person name="Davis P."/>
            <person name="Feltwell T."/>
            <person name="Fraser A."/>
            <person name="Gentles S."/>
            <person name="Goble A."/>
            <person name="Hamlin N."/>
            <person name="Harris D.E."/>
            <person name="Hidalgo J."/>
            <person name="Hodgson G."/>
            <person name="Holroyd S."/>
            <person name="Hornsby T."/>
            <person name="Howarth S."/>
            <person name="Huckle E.J."/>
            <person name="Hunt S."/>
            <person name="Jagels K."/>
            <person name="James K.D."/>
            <person name="Jones L."/>
            <person name="Jones M."/>
            <person name="Leather S."/>
            <person name="McDonald S."/>
            <person name="McLean J."/>
            <person name="Mooney P."/>
            <person name="Moule S."/>
            <person name="Mungall K.L."/>
            <person name="Murphy L.D."/>
            <person name="Niblett D."/>
            <person name="Odell C."/>
            <person name="Oliver K."/>
            <person name="O'Neil S."/>
            <person name="Pearson D."/>
            <person name="Quail M.A."/>
            <person name="Rabbinowitsch E."/>
            <person name="Rutherford K.M."/>
            <person name="Rutter S."/>
            <person name="Saunders D."/>
            <person name="Seeger K."/>
            <person name="Sharp S."/>
            <person name="Skelton J."/>
            <person name="Simmonds M.N."/>
            <person name="Squares R."/>
            <person name="Squares S."/>
            <person name="Stevens K."/>
            <person name="Taylor K."/>
            <person name="Taylor R.G."/>
            <person name="Tivey A."/>
            <person name="Walsh S.V."/>
            <person name="Warren T."/>
            <person name="Whitehead S."/>
            <person name="Woodward J.R."/>
            <person name="Volckaert G."/>
            <person name="Aert R."/>
            <person name="Robben J."/>
            <person name="Grymonprez B."/>
            <person name="Weltjens I."/>
            <person name="Vanstreels E."/>
            <person name="Rieger M."/>
            <person name="Schaefer M."/>
            <person name="Mueller-Auer S."/>
            <person name="Gabel C."/>
            <person name="Fuchs M."/>
            <person name="Duesterhoeft A."/>
            <person name="Fritzc C."/>
            <person name="Holzer E."/>
            <person name="Moestl D."/>
            <person name="Hilbert H."/>
            <person name="Borzym K."/>
            <person name="Langer I."/>
            <person name="Beck A."/>
            <person name="Lehrach H."/>
            <person name="Reinhardt R."/>
            <person name="Pohl T.M."/>
            <person name="Eger P."/>
            <person name="Zimmermann W."/>
            <person name="Wedler H."/>
            <person name="Wambutt R."/>
            <person name="Purnelle B."/>
            <person name="Goffeau A."/>
            <person name="Cadieu E."/>
            <person name="Dreano S."/>
            <person name="Gloux S."/>
            <person name="Lelaure V."/>
            <person name="Mottier S."/>
            <person name="Galibert F."/>
            <person name="Aves S.J."/>
            <person name="Xiang Z."/>
            <person name="Hunt C."/>
            <person name="Moore K."/>
            <person name="Hurst S.M."/>
            <person name="Lucas M."/>
            <person name="Rochet M."/>
            <person name="Gaillardin C."/>
            <person name="Tallada V.A."/>
            <person name="Garzon A."/>
            <person name="Thode G."/>
            <person name="Daga R.R."/>
            <person name="Cruzado L."/>
            <person name="Jimenez J."/>
            <person name="Sanchez M."/>
            <person name="del Rey F."/>
            <person name="Benito J."/>
            <person name="Dominguez A."/>
            <person name="Revuelta J.L."/>
            <person name="Moreno S."/>
            <person name="Armstrong J."/>
            <person name="Forsburg S.L."/>
            <person name="Cerutti L."/>
            <person name="Lowe T."/>
            <person name="McCombie W.R."/>
            <person name="Paulsen I."/>
            <person name="Potashkin J."/>
            <person name="Shpakovski G.V."/>
            <person name="Ussery D."/>
            <person name="Barrell B.G."/>
            <person name="Nurse P."/>
        </authorList>
    </citation>
    <scope>NUCLEOTIDE SEQUENCE [LARGE SCALE GENOMIC DNA]</scope>
    <source>
        <strain>972 / ATCC 24843</strain>
    </source>
</reference>
<reference key="2">
    <citation type="submission" date="1996-02" db="EMBL/GenBank/DDBJ databases">
        <title>Fission yeast TPR gene involved in G0 transition.</title>
        <authorList>
            <person name="Okazaki K."/>
            <person name="Okayama H."/>
        </authorList>
    </citation>
    <scope>NUCLEOTIDE SEQUENCE [GENOMIC DNA] OF 1-386</scope>
</reference>
<reference key="3">
    <citation type="journal article" date="2001" name="Nat. Cell Biol.">
        <title>Proteins containing the UBA domain are able to bind to multi-ubiquitin chains.</title>
        <authorList>
            <person name="Wilkinson C.R.M."/>
            <person name="Seeger M."/>
            <person name="Hartmann-Petersen R."/>
            <person name="Stone M."/>
            <person name="Wallace M."/>
            <person name="Semple C."/>
            <person name="Gordon C."/>
        </authorList>
    </citation>
    <scope>IDENTIFICATION</scope>
</reference>
<reference key="4">
    <citation type="journal article" date="2008" name="J. Proteome Res.">
        <title>Phosphoproteome analysis of fission yeast.</title>
        <authorList>
            <person name="Wilson-Grady J.T."/>
            <person name="Villen J."/>
            <person name="Gygi S.P."/>
        </authorList>
    </citation>
    <scope>PHOSPHORYLATION [LARGE SCALE ANALYSIS] AT SER-456</scope>
    <scope>IDENTIFICATION BY MASS SPECTROMETRY</scope>
</reference>
<accession>Q11119</accession>
<name>UBP14_SCHPO</name>
<keyword id="KW-0378">Hydrolase</keyword>
<keyword id="KW-0479">Metal-binding</keyword>
<keyword id="KW-0597">Phosphoprotein</keyword>
<keyword id="KW-0645">Protease</keyword>
<keyword id="KW-1185">Reference proteome</keyword>
<keyword id="KW-0677">Repeat</keyword>
<keyword id="KW-0788">Thiol protease</keyword>
<keyword id="KW-0833">Ubl conjugation pathway</keyword>
<keyword id="KW-0862">Zinc</keyword>
<keyword id="KW-0863">Zinc-finger</keyword>
<organism>
    <name type="scientific">Schizosaccharomyces pombe (strain 972 / ATCC 24843)</name>
    <name type="common">Fission yeast</name>
    <dbReference type="NCBI Taxonomy" id="284812"/>
    <lineage>
        <taxon>Eukaryota</taxon>
        <taxon>Fungi</taxon>
        <taxon>Dikarya</taxon>
        <taxon>Ascomycota</taxon>
        <taxon>Taphrinomycotina</taxon>
        <taxon>Schizosaccharomycetes</taxon>
        <taxon>Schizosaccharomycetales</taxon>
        <taxon>Schizosaccharomycetaceae</taxon>
        <taxon>Schizosaccharomyces</taxon>
    </lineage>
</organism>
<dbReference type="EC" id="3.4.19.12"/>
<dbReference type="EMBL" id="CU329671">
    <property type="protein sequence ID" value="CAA17049.1"/>
    <property type="molecule type" value="Genomic_DNA"/>
</dbReference>
<dbReference type="EMBL" id="D83659">
    <property type="protein sequence ID" value="BAA12032.1"/>
    <property type="molecule type" value="Genomic_DNA"/>
</dbReference>
<dbReference type="PIR" id="T40647">
    <property type="entry name" value="T40647"/>
</dbReference>
<dbReference type="RefSeq" id="NP_596085.1">
    <property type="nucleotide sequence ID" value="NM_001021999.2"/>
</dbReference>
<dbReference type="SMR" id="Q11119"/>
<dbReference type="BioGRID" id="277672">
    <property type="interactions" value="2"/>
</dbReference>
<dbReference type="FunCoup" id="Q11119">
    <property type="interactions" value="743"/>
</dbReference>
<dbReference type="STRING" id="284812.Q11119"/>
<dbReference type="MEROPS" id="C19.A65"/>
<dbReference type="iPTMnet" id="Q11119"/>
<dbReference type="PaxDb" id="4896-SPBC6B1.06c.1"/>
<dbReference type="EnsemblFungi" id="SPBC6B1.06c.1">
    <property type="protein sequence ID" value="SPBC6B1.06c.1:pep"/>
    <property type="gene ID" value="SPBC6B1.06c"/>
</dbReference>
<dbReference type="GeneID" id="2541157"/>
<dbReference type="KEGG" id="spo:2541157"/>
<dbReference type="PomBase" id="SPBC6B1.06c">
    <property type="gene designation" value="ubp14"/>
</dbReference>
<dbReference type="VEuPathDB" id="FungiDB:SPBC6B1.06c"/>
<dbReference type="eggNOG" id="KOG0944">
    <property type="taxonomic scope" value="Eukaryota"/>
</dbReference>
<dbReference type="HOGENOM" id="CLU_009884_1_0_1"/>
<dbReference type="InParanoid" id="Q11119"/>
<dbReference type="OMA" id="FVPCEHT"/>
<dbReference type="PhylomeDB" id="Q11119"/>
<dbReference type="Reactome" id="R-SPO-5689880">
    <property type="pathway name" value="Ub-specific processing proteases"/>
</dbReference>
<dbReference type="Reactome" id="R-SPO-8948751">
    <property type="pathway name" value="Regulation of PTEN stability and activity"/>
</dbReference>
<dbReference type="PRO" id="PR:Q11119"/>
<dbReference type="Proteomes" id="UP000002485">
    <property type="component" value="Chromosome II"/>
</dbReference>
<dbReference type="GO" id="GO:0005829">
    <property type="term" value="C:cytosol"/>
    <property type="evidence" value="ECO:0000318"/>
    <property type="project" value="GO_Central"/>
</dbReference>
<dbReference type="GO" id="GO:0005654">
    <property type="term" value="C:nucleoplasm"/>
    <property type="evidence" value="ECO:0007005"/>
    <property type="project" value="PomBase"/>
</dbReference>
<dbReference type="GO" id="GO:0005634">
    <property type="term" value="C:nucleus"/>
    <property type="evidence" value="ECO:0007005"/>
    <property type="project" value="PomBase"/>
</dbReference>
<dbReference type="GO" id="GO:0004843">
    <property type="term" value="F:cysteine-type deubiquitinase activity"/>
    <property type="evidence" value="ECO:0000318"/>
    <property type="project" value="GO_Central"/>
</dbReference>
<dbReference type="GO" id="GO:1990380">
    <property type="term" value="F:K48-linked deubiquitinase activity"/>
    <property type="evidence" value="ECO:0007005"/>
    <property type="project" value="PomBase"/>
</dbReference>
<dbReference type="GO" id="GO:0008270">
    <property type="term" value="F:zinc ion binding"/>
    <property type="evidence" value="ECO:0007669"/>
    <property type="project" value="UniProtKB-KW"/>
</dbReference>
<dbReference type="GO" id="GO:0043161">
    <property type="term" value="P:proteasome-mediated ubiquitin-dependent protein catabolic process"/>
    <property type="evidence" value="ECO:0000266"/>
    <property type="project" value="PomBase"/>
</dbReference>
<dbReference type="GO" id="GO:0016579">
    <property type="term" value="P:protein deubiquitination"/>
    <property type="evidence" value="ECO:0007669"/>
    <property type="project" value="InterPro"/>
</dbReference>
<dbReference type="GO" id="GO:0031647">
    <property type="term" value="P:regulation of protein stability"/>
    <property type="evidence" value="ECO:0000318"/>
    <property type="project" value="GO_Central"/>
</dbReference>
<dbReference type="CDD" id="cd02658">
    <property type="entry name" value="Peptidase_C19B"/>
    <property type="match status" value="1"/>
</dbReference>
<dbReference type="CDD" id="cd14385">
    <property type="entry name" value="UBA1_spUBP14_like"/>
    <property type="match status" value="1"/>
</dbReference>
<dbReference type="CDD" id="cd14297">
    <property type="entry name" value="UBA2_spUBP14_like"/>
    <property type="match status" value="1"/>
</dbReference>
<dbReference type="FunFam" id="1.10.8.10:FF:000086">
    <property type="entry name" value="Ubiquitin carboxyl-terminal hydrolase"/>
    <property type="match status" value="1"/>
</dbReference>
<dbReference type="FunFam" id="1.10.8.10:FF:000103">
    <property type="entry name" value="Ubiquitin carboxyl-terminal hydrolase"/>
    <property type="match status" value="1"/>
</dbReference>
<dbReference type="FunFam" id="3.30.40.10:FF:000396">
    <property type="entry name" value="Ubiquitin carboxyl-terminal hydrolase"/>
    <property type="match status" value="1"/>
</dbReference>
<dbReference type="FunFam" id="3.30.40.10:FF:000587">
    <property type="entry name" value="Ubiquitin carboxyl-terminal hydrolase"/>
    <property type="match status" value="1"/>
</dbReference>
<dbReference type="Gene3D" id="3.90.70.10">
    <property type="entry name" value="Cysteine proteinases"/>
    <property type="match status" value="1"/>
</dbReference>
<dbReference type="Gene3D" id="1.10.8.10">
    <property type="entry name" value="DNA helicase RuvA subunit, C-terminal domain"/>
    <property type="match status" value="2"/>
</dbReference>
<dbReference type="Gene3D" id="3.30.40.10">
    <property type="entry name" value="Zinc/RING finger domain, C3HC4 (zinc finger)"/>
    <property type="match status" value="2"/>
</dbReference>
<dbReference type="InterPro" id="IPR038765">
    <property type="entry name" value="Papain-like_cys_pep_sf"/>
</dbReference>
<dbReference type="InterPro" id="IPR050164">
    <property type="entry name" value="Peptidase_C19"/>
</dbReference>
<dbReference type="InterPro" id="IPR001394">
    <property type="entry name" value="Peptidase_C19_UCH"/>
</dbReference>
<dbReference type="InterPro" id="IPR015940">
    <property type="entry name" value="UBA"/>
</dbReference>
<dbReference type="InterPro" id="IPR009060">
    <property type="entry name" value="UBA-like_sf"/>
</dbReference>
<dbReference type="InterPro" id="IPR016652">
    <property type="entry name" value="Ubiquitinyl_hydrolase"/>
</dbReference>
<dbReference type="InterPro" id="IPR041432">
    <property type="entry name" value="UBP13_Znf-UBP_var"/>
</dbReference>
<dbReference type="InterPro" id="IPR018200">
    <property type="entry name" value="USP_CS"/>
</dbReference>
<dbReference type="InterPro" id="IPR028889">
    <property type="entry name" value="USP_dom"/>
</dbReference>
<dbReference type="InterPro" id="IPR013083">
    <property type="entry name" value="Znf_RING/FYVE/PHD"/>
</dbReference>
<dbReference type="InterPro" id="IPR001607">
    <property type="entry name" value="Znf_UBP"/>
</dbReference>
<dbReference type="PANTHER" id="PTHR24006">
    <property type="entry name" value="UBIQUITIN CARBOXYL-TERMINAL HYDROLASE"/>
    <property type="match status" value="1"/>
</dbReference>
<dbReference type="PANTHER" id="PTHR24006:SF664">
    <property type="entry name" value="UBIQUITIN CARBOXYL-TERMINAL HYDROLASE"/>
    <property type="match status" value="1"/>
</dbReference>
<dbReference type="Pfam" id="PF22562">
    <property type="entry name" value="UBA_7"/>
    <property type="match status" value="2"/>
</dbReference>
<dbReference type="Pfam" id="PF00443">
    <property type="entry name" value="UCH"/>
    <property type="match status" value="1"/>
</dbReference>
<dbReference type="Pfam" id="PF02148">
    <property type="entry name" value="zf-UBP"/>
    <property type="match status" value="1"/>
</dbReference>
<dbReference type="Pfam" id="PF17807">
    <property type="entry name" value="zf-UBP_var"/>
    <property type="match status" value="1"/>
</dbReference>
<dbReference type="PIRSF" id="PIRSF016308">
    <property type="entry name" value="UBP"/>
    <property type="match status" value="1"/>
</dbReference>
<dbReference type="SMART" id="SM00165">
    <property type="entry name" value="UBA"/>
    <property type="match status" value="2"/>
</dbReference>
<dbReference type="SMART" id="SM00290">
    <property type="entry name" value="ZnF_UBP"/>
    <property type="match status" value="2"/>
</dbReference>
<dbReference type="SUPFAM" id="SSF54001">
    <property type="entry name" value="Cysteine proteinases"/>
    <property type="match status" value="1"/>
</dbReference>
<dbReference type="SUPFAM" id="SSF57850">
    <property type="entry name" value="RING/U-box"/>
    <property type="match status" value="2"/>
</dbReference>
<dbReference type="SUPFAM" id="SSF46934">
    <property type="entry name" value="UBA-like"/>
    <property type="match status" value="1"/>
</dbReference>
<dbReference type="PROSITE" id="PS50030">
    <property type="entry name" value="UBA"/>
    <property type="match status" value="2"/>
</dbReference>
<dbReference type="PROSITE" id="PS00972">
    <property type="entry name" value="USP_1"/>
    <property type="match status" value="1"/>
</dbReference>
<dbReference type="PROSITE" id="PS00973">
    <property type="entry name" value="USP_2"/>
    <property type="match status" value="1"/>
</dbReference>
<dbReference type="PROSITE" id="PS50235">
    <property type="entry name" value="USP_3"/>
    <property type="match status" value="1"/>
</dbReference>
<dbReference type="PROSITE" id="PS50271">
    <property type="entry name" value="ZF_UBP"/>
    <property type="match status" value="2"/>
</dbReference>
<protein>
    <recommendedName>
        <fullName>Ubiquitin carboxyl-terminal hydrolase 14</fullName>
        <ecNumber>3.4.19.12</ecNumber>
    </recommendedName>
    <alternativeName>
        <fullName>Deubiquitinating enzyme 14</fullName>
    </alternativeName>
    <alternativeName>
        <fullName>UBA domain-containing protein 2</fullName>
    </alternativeName>
    <alternativeName>
        <fullName>Ubiquitin thioesterase 14</fullName>
    </alternativeName>
    <alternativeName>
        <fullName>Ubiquitin-specific-processing protease 14</fullName>
    </alternativeName>
</protein>
<comment type="catalytic activity">
    <reaction>
        <text>Thiol-dependent hydrolysis of ester, thioester, amide, peptide and isopeptide bonds formed by the C-terminal Gly of ubiquitin (a 76-residue protein attached to proteins as an intracellular targeting signal).</text>
        <dbReference type="EC" id="3.4.19.12"/>
    </reaction>
</comment>
<comment type="similarity">
    <text evidence="6">Belongs to the peptidase C19 family.</text>
</comment>
<sequence length="775" mass="86783">MSCPHLTETNVVIPDNSQVIYREECVRCFNSQDEEGGIDLCLTCFQSGCGETGLKHSLVHFEQTLHPIVVTIARQPKQKINDEPPQKITKLEIREDSDEDLYDYFYVPKCLVCNIILDIQDPLLSLSLEAMKNATKASNKSQLTAWENELTTCDHIINLPENETYVTNLDNATCSKCDLAENLWMCLTCGALSCGRKQYGGGGGNGHALSHYDDTGHPLAVKLKSISPDGQADIYCYSCDEERIDPNIKTHMLNFGIDIAKLNKTEKSLAELQLEQNLNWDFGASEEDDASKRLFGPGLTGLKNLGNSCYLASTMQSLFSIKEFAIHELNLFNTYNSVCQTPTTDLQCQLGKLADGLVSGKFSKPSKIGLLNNPSSSILPYQDGLRPFMFKDVVGQGHSEFGTSQQQDAYEFLLYLLGKIRKSSIAKTDITKIFDFETEQKLSCLSCKRVRYSSFSSQGLTLTVPRVKIGEIEGEQIYEEVSIDQCLDATIQPDQMEYTCEACKSKLGATTTTAMKSFPKVLILQANRFDLQGYQVKKLSIPIIVNEDGIYNFDRLMAKDHPNDEDYLPEKTETIEWNQSAIEQLQAMGFPLVRCQRALLATGNSDTETAMNWLFEHMEDPEIDKPIEVSELLPKADSSVSEENVQSLCEFGFTVAQARKGLLESNNNIERAVDWILNHPDESFEEPPLEGSDSSIKNENMGSWESTNVPVNYNLKAIISHKGSSAHAGHYVAFIRKEIDGKQQWVLFNDEKVLQVASLEEAKTTGYVYLFERLD</sequence>
<proteinExistence type="evidence at protein level"/>
<evidence type="ECO:0000255" key="1">
    <source>
        <dbReference type="PROSITE-ProRule" id="PRU00212"/>
    </source>
</evidence>
<evidence type="ECO:0000255" key="2">
    <source>
        <dbReference type="PROSITE-ProRule" id="PRU00502"/>
    </source>
</evidence>
<evidence type="ECO:0000255" key="3">
    <source>
        <dbReference type="PROSITE-ProRule" id="PRU10092"/>
    </source>
</evidence>
<evidence type="ECO:0000255" key="4">
    <source>
        <dbReference type="PROSITE-ProRule" id="PRU10093"/>
    </source>
</evidence>
<evidence type="ECO:0000269" key="5">
    <source>
    </source>
</evidence>
<evidence type="ECO:0000305" key="6"/>
<gene>
    <name type="primary">ubp14</name>
    <name type="synonym">ucp2</name>
    <name type="ORF">SPBC6B1.06c</name>
</gene>